<organismHost>
    <name type="scientific">Homo sapiens</name>
    <name type="common">Human</name>
    <dbReference type="NCBI Taxonomy" id="9606"/>
</organismHost>
<proteinExistence type="evidence at transcript level"/>
<comment type="function">
    <text evidence="1">Major capsid protein that self-associates to form 240 hexon trimers, each in the shape of a hexagon, building most of the pseudo T=25 capsid. Assembled into trimeric units with the help of the chaperone shutoff protein. Transported by pre-protein VI to the nucleus where it associates with other structural proteins to form an empty capsid. Might be involved, through its interaction with host dyneins, in the intracellular microtubule-dependent transport of incoming viral capsid to the nucleus (By similarity).</text>
</comment>
<comment type="subunit">
    <text evidence="1">Homotrimer (By similarity). Interacts with the capsid vertex protein; this interaction binds the peripentonal hexons to the neighboring penton base. Interacts with the hexon-linking protein; this interaction tethers the hexons surrounding the penton to those situated in the central plate of the facet. Interacts with the hexon-interlacing protein; this interaction lashes the hexons together. Interacts with host dyneins DYNC1LI1 and DYNC1I2; this interaction might be involved in intracellular microtubule-dependent transport of incoming viral capsid. Interacts with the shutoff protein; this interaction allows folding and formation of hexons trimers. Interacts with pre-protein VI; this interaction probably allows nuclear import of hexon trimers and possibly pre-capsid assembly (By similarity).</text>
</comment>
<comment type="subcellular location">
    <subcellularLocation>
        <location evidence="1">Virion</location>
    </subcellularLocation>
    <subcellularLocation>
        <location evidence="1">Host nucleus</location>
    </subcellularLocation>
    <text evidence="1">Forms the capsid icosahedric shell. Present in 720 copies per virion, assembled in 240 trimers (By similarity).</text>
</comment>
<comment type="induction">
    <text>Expressed in the late phase of the viral replicative cycle.</text>
</comment>
<comment type="miscellaneous">
    <text evidence="1">All late proteins expressed from the major late promoter are produced by alternative splicing and alternative polyadenylation of the same gene giving rise to non-overlapping ORFs. A leader sequence is present in the N-terminus of all these mRNAs and is recognized by the viral shutoff protein to provide expression although conventional translation via ribosome scanning from the cap has been shut off in the host cell (By similarity).</text>
</comment>
<comment type="similarity">
    <text evidence="3">Belongs to the adenoviridae hexon protein family.</text>
</comment>
<sequence>AYNALAPKGAPNSCEWEQNETAQVDAQELDEEENEANEAQAREQEQAKKTHVYAQAPLSGIKITKEGLQIGTADATVAGAGKEIFADKTFQPEPQVGESQWNEADATAAGGRVLKKTTPMKPCYGSYARPTNSNGGQGVLWLTNGKLESQVEMQFFSTSTNATNEVNNIQPTVVLYSEDVNMETPDTHLSYKPKMGDKNAKVSLGQQAMPNRPNYIAFRDNFIGLMYYNSTGNMGVLAGQASQLNAVVDLQDRNTELSYQLLLDSIGDRTRYFSMWNQAVDSYDPDVRIIENHGTEDELPNYCFPLGGIGITDTFQAVKTTAANGDQGNTTWQKDSTFAERNEIGVGNNFAMEINLNANLWRNFLYSNIALYLPDKLKYNPTNVDISDNPNTYDHMKRVVAPGLVDCYINLGARWSLDYMDNVNPFNHHRNAGLRYRSMLLGNGRYVPFHIQVPQKFFAIKNLLL</sequence>
<protein>
    <recommendedName>
        <fullName>Hexon protein</fullName>
        <shortName>CP-H</shortName>
    </recommendedName>
    <alternativeName>
        <fullName>Protein II</fullName>
    </alternativeName>
</protein>
<organism>
    <name type="scientific">Human adenovirus C serotype 6</name>
    <name type="common">HAdV-6</name>
    <name type="synonym">Human adenovirus 6</name>
    <dbReference type="NCBI Taxonomy" id="10534"/>
    <lineage>
        <taxon>Viruses</taxon>
        <taxon>Varidnaviria</taxon>
        <taxon>Bamfordvirae</taxon>
        <taxon>Preplasmiviricota</taxon>
        <taxon>Tectiliviricetes</taxon>
        <taxon>Rowavirales</taxon>
        <taxon>Adenoviridae</taxon>
        <taxon>Mastadenovirus</taxon>
        <taxon>Human mastadenovirus C</taxon>
    </lineage>
</organism>
<evidence type="ECO:0000250" key="1"/>
<evidence type="ECO:0000256" key="2">
    <source>
        <dbReference type="SAM" id="MobiDB-lite"/>
    </source>
</evidence>
<evidence type="ECO:0000305" key="3"/>
<accession>Q04966</accession>
<keyword id="KW-0167">Capsid protein</keyword>
<keyword id="KW-1176">Cytoplasmic inwards viral transport</keyword>
<keyword id="KW-1048">Host nucleus</keyword>
<keyword id="KW-0945">Host-virus interaction</keyword>
<keyword id="KW-0426">Late protein</keyword>
<keyword id="KW-1177">Microtubular inwards viral transport</keyword>
<keyword id="KW-1148">T=25 icosahedral capsid protein</keyword>
<keyword id="KW-0946">Virion</keyword>
<keyword id="KW-1160">Virus entry into host cell</keyword>
<feature type="chain" id="PRO_0000221817" description="Hexon protein">
    <location>
        <begin position="1" status="less than"/>
        <end position="465" status="greater than"/>
    </location>
</feature>
<feature type="region of interest" description="Disordered" evidence="2">
    <location>
        <begin position="1"/>
        <end position="51"/>
    </location>
</feature>
<feature type="compositionally biased region" description="Polar residues" evidence="2">
    <location>
        <begin position="15"/>
        <end position="24"/>
    </location>
</feature>
<feature type="compositionally biased region" description="Acidic residues" evidence="2">
    <location>
        <begin position="27"/>
        <end position="36"/>
    </location>
</feature>
<feature type="non-terminal residue">
    <location>
        <position position="1"/>
    </location>
</feature>
<feature type="non-terminal residue">
    <location>
        <position position="465"/>
    </location>
</feature>
<gene>
    <name type="ORF">L3</name>
</gene>
<name>CAPSH_ADE06</name>
<reference key="1">
    <citation type="journal article" date="1993" name="Res. Virol.">
        <title>The hexon genes of adenoviruses of subgenus C: comparison of the variable regions.</title>
        <authorList>
            <person name="Pring-Akerblom P."/>
            <person name="Adrian T."/>
        </authorList>
    </citation>
    <scope>NUCLEOTIDE SEQUENCE [GENOMIC DNA]</scope>
</reference>
<dbReference type="EMBL" id="X67710">
    <property type="protein sequence ID" value="CAA47947.1"/>
    <property type="molecule type" value="Genomic_DNA"/>
</dbReference>
<dbReference type="SMR" id="Q04966"/>
<dbReference type="GO" id="GO:0043657">
    <property type="term" value="C:host cell"/>
    <property type="evidence" value="ECO:0007669"/>
    <property type="project" value="GOC"/>
</dbReference>
<dbReference type="GO" id="GO:0042025">
    <property type="term" value="C:host cell nucleus"/>
    <property type="evidence" value="ECO:0007669"/>
    <property type="project" value="UniProtKB-SubCell"/>
</dbReference>
<dbReference type="GO" id="GO:0039623">
    <property type="term" value="C:T=25 icosahedral viral capsid"/>
    <property type="evidence" value="ECO:0007669"/>
    <property type="project" value="UniProtKB-KW"/>
</dbReference>
<dbReference type="GO" id="GO:0075521">
    <property type="term" value="P:microtubule-dependent intracellular transport of viral material towards nucleus"/>
    <property type="evidence" value="ECO:0007669"/>
    <property type="project" value="UniProtKB-KW"/>
</dbReference>
<dbReference type="GO" id="GO:0046718">
    <property type="term" value="P:symbiont entry into host cell"/>
    <property type="evidence" value="ECO:0007669"/>
    <property type="project" value="UniProtKB-KW"/>
</dbReference>
<dbReference type="Gene3D" id="2.170.9.10">
    <property type="entry name" value="Adenovirus Type 2 Hexon, domain 1"/>
    <property type="match status" value="1"/>
</dbReference>
<dbReference type="Gene3D" id="3.90.39.10">
    <property type="entry name" value="Hexon Major Viral Coat Protein, domain 2"/>
    <property type="match status" value="1"/>
</dbReference>
<dbReference type="InterPro" id="IPR016107">
    <property type="entry name" value="Adenovirus_Pll_hexon_N"/>
</dbReference>
<dbReference type="InterPro" id="IPR044942">
    <property type="entry name" value="Adenovirus_Pll_hexon_sub2"/>
</dbReference>
<dbReference type="InterPro" id="IPR016112">
    <property type="entry name" value="VP_dsDNA_II"/>
</dbReference>
<dbReference type="Pfam" id="PF01065">
    <property type="entry name" value="Adeno_hexon"/>
    <property type="match status" value="1"/>
</dbReference>
<dbReference type="SUPFAM" id="SSF49749">
    <property type="entry name" value="Group II dsDNA viruses VP"/>
    <property type="match status" value="1"/>
</dbReference>